<evidence type="ECO:0000250" key="1"/>
<evidence type="ECO:0000255" key="2"/>
<evidence type="ECO:0000305" key="3"/>
<sequence length="400" mass="43732">MTSTSIPTFPFDRPVPTEPSPMLSELRNSCPVAPIELPSGHTAWLVTRFDDVKGVLSDKRFSCRAAAHPSSPPFVPFVQLCPSLLSIDGPQHTAARRLLAQGLNPGFIARMRPVVQQIVDNALDDLAAAEPPVDFQEIVSVPIGEQLMAKLLGVEPETVHELAAHVDAAMSVCEIGDEEVSRRWSALCTMVIDILHRKLAEPGDDLLSTIAQANRQQSTMTDEQVVGMLLTVVIGGVDTPIAVITNGLASLLHHRDQYERLVEDPGRVARAVEEIVRFNPATEIEHLRVVTEDVVIAGTALSAGSPAFTSITSANRDSDQFLDPDEFDVERNPNEHIAFGYGPHACPASAYSRMCLTTFFTSLTQRFPQLQLARPFEDLERRGKGLHSVGIKELLVTWPT</sequence>
<protein>
    <recommendedName>
        <fullName>Putative cytochrome P450 141</fullName>
        <ecNumber>1.14.-.-</ecNumber>
    </recommendedName>
</protein>
<organism>
    <name type="scientific">Mycobacterium tuberculosis (strain CDC 1551 / Oshkosh)</name>
    <dbReference type="NCBI Taxonomy" id="83331"/>
    <lineage>
        <taxon>Bacteria</taxon>
        <taxon>Bacillati</taxon>
        <taxon>Actinomycetota</taxon>
        <taxon>Actinomycetes</taxon>
        <taxon>Mycobacteriales</taxon>
        <taxon>Mycobacteriaceae</taxon>
        <taxon>Mycobacterium</taxon>
        <taxon>Mycobacterium tuberculosis complex</taxon>
    </lineage>
</organism>
<name>CP141_MYCTO</name>
<proteinExistence type="inferred from homology"/>
<accession>P9WPL6</accession>
<accession>L0TBL6</accession>
<accession>O08362</accession>
<gene>
    <name type="primary">cyp141</name>
    <name type="ordered locus">MT3203</name>
</gene>
<dbReference type="EC" id="1.14.-.-"/>
<dbReference type="EMBL" id="AE000516">
    <property type="protein sequence ID" value="AAK47543.1"/>
    <property type="molecule type" value="Genomic_DNA"/>
</dbReference>
<dbReference type="PIR" id="H70921">
    <property type="entry name" value="H70921"/>
</dbReference>
<dbReference type="RefSeq" id="WP_003899925.1">
    <property type="nucleotide sequence ID" value="NZ_KK341227.1"/>
</dbReference>
<dbReference type="SMR" id="P9WPL6"/>
<dbReference type="KEGG" id="mtc:MT3203"/>
<dbReference type="PATRIC" id="fig|83331.31.peg.3453"/>
<dbReference type="HOGENOM" id="CLU_033716_1_1_11"/>
<dbReference type="Proteomes" id="UP000001020">
    <property type="component" value="Chromosome"/>
</dbReference>
<dbReference type="GO" id="GO:0005886">
    <property type="term" value="C:plasma membrane"/>
    <property type="evidence" value="ECO:0007669"/>
    <property type="project" value="UniProtKB-SubCell"/>
</dbReference>
<dbReference type="GO" id="GO:0020037">
    <property type="term" value="F:heme binding"/>
    <property type="evidence" value="ECO:0007669"/>
    <property type="project" value="InterPro"/>
</dbReference>
<dbReference type="GO" id="GO:0005506">
    <property type="term" value="F:iron ion binding"/>
    <property type="evidence" value="ECO:0007669"/>
    <property type="project" value="InterPro"/>
</dbReference>
<dbReference type="GO" id="GO:0004497">
    <property type="term" value="F:monooxygenase activity"/>
    <property type="evidence" value="ECO:0007669"/>
    <property type="project" value="UniProtKB-KW"/>
</dbReference>
<dbReference type="GO" id="GO:0016705">
    <property type="term" value="F:oxidoreductase activity, acting on paired donors, with incorporation or reduction of molecular oxygen"/>
    <property type="evidence" value="ECO:0007669"/>
    <property type="project" value="InterPro"/>
</dbReference>
<dbReference type="FunFam" id="1.10.630.10:FF:000018">
    <property type="entry name" value="Cytochrome P450 monooxygenase"/>
    <property type="match status" value="1"/>
</dbReference>
<dbReference type="Gene3D" id="1.10.630.10">
    <property type="entry name" value="Cytochrome P450"/>
    <property type="match status" value="1"/>
</dbReference>
<dbReference type="InterPro" id="IPR001128">
    <property type="entry name" value="Cyt_P450"/>
</dbReference>
<dbReference type="InterPro" id="IPR002397">
    <property type="entry name" value="Cyt_P450_B"/>
</dbReference>
<dbReference type="InterPro" id="IPR017972">
    <property type="entry name" value="Cyt_P450_CS"/>
</dbReference>
<dbReference type="InterPro" id="IPR036396">
    <property type="entry name" value="Cyt_P450_sf"/>
</dbReference>
<dbReference type="PANTHER" id="PTHR46696:SF5">
    <property type="entry name" value="CYTOCHROME P450 BJ-1"/>
    <property type="match status" value="1"/>
</dbReference>
<dbReference type="PANTHER" id="PTHR46696">
    <property type="entry name" value="P450, PUTATIVE (EUROFUNG)-RELATED"/>
    <property type="match status" value="1"/>
</dbReference>
<dbReference type="Pfam" id="PF00067">
    <property type="entry name" value="p450"/>
    <property type="match status" value="1"/>
</dbReference>
<dbReference type="PRINTS" id="PR00359">
    <property type="entry name" value="BP450"/>
</dbReference>
<dbReference type="SUPFAM" id="SSF48264">
    <property type="entry name" value="Cytochrome P450"/>
    <property type="match status" value="1"/>
</dbReference>
<dbReference type="PROSITE" id="PS00086">
    <property type="entry name" value="CYTOCHROME_P450"/>
    <property type="match status" value="1"/>
</dbReference>
<reference key="1">
    <citation type="journal article" date="2002" name="J. Bacteriol.">
        <title>Whole-genome comparison of Mycobacterium tuberculosis clinical and laboratory strains.</title>
        <authorList>
            <person name="Fleischmann R.D."/>
            <person name="Alland D."/>
            <person name="Eisen J.A."/>
            <person name="Carpenter L."/>
            <person name="White O."/>
            <person name="Peterson J.D."/>
            <person name="DeBoy R.T."/>
            <person name="Dodson R.J."/>
            <person name="Gwinn M.L."/>
            <person name="Haft D.H."/>
            <person name="Hickey E.K."/>
            <person name="Kolonay J.F."/>
            <person name="Nelson W.C."/>
            <person name="Umayam L.A."/>
            <person name="Ermolaeva M.D."/>
            <person name="Salzberg S.L."/>
            <person name="Delcher A."/>
            <person name="Utterback T.R."/>
            <person name="Weidman J.F."/>
            <person name="Khouri H.M."/>
            <person name="Gill J."/>
            <person name="Mikula A."/>
            <person name="Bishai W."/>
            <person name="Jacobs W.R. Jr."/>
            <person name="Venter J.C."/>
            <person name="Fraser C.M."/>
        </authorList>
    </citation>
    <scope>NUCLEOTIDE SEQUENCE [LARGE SCALE GENOMIC DNA]</scope>
    <source>
        <strain>CDC 1551 / Oshkosh</strain>
    </source>
</reference>
<keyword id="KW-1003">Cell membrane</keyword>
<keyword id="KW-0349">Heme</keyword>
<keyword id="KW-0408">Iron</keyword>
<keyword id="KW-0472">Membrane</keyword>
<keyword id="KW-0479">Metal-binding</keyword>
<keyword id="KW-0503">Monooxygenase</keyword>
<keyword id="KW-0560">Oxidoreductase</keyword>
<keyword id="KW-1185">Reference proteome</keyword>
<keyword id="KW-0812">Transmembrane</keyword>
<keyword id="KW-1133">Transmembrane helix</keyword>
<feature type="chain" id="PRO_0000426930" description="Putative cytochrome P450 141">
    <location>
        <begin position="1"/>
        <end position="400"/>
    </location>
</feature>
<feature type="transmembrane region" description="Helical" evidence="2">
    <location>
        <begin position="225"/>
        <end position="245"/>
    </location>
</feature>
<feature type="transmembrane region" description="Helical" evidence="2">
    <location>
        <begin position="294"/>
        <end position="314"/>
    </location>
</feature>
<feature type="binding site" description="axial binding residue" evidence="1">
    <location>
        <position position="346"/>
    </location>
    <ligand>
        <name>heme</name>
        <dbReference type="ChEBI" id="CHEBI:30413"/>
    </ligand>
    <ligandPart>
        <name>Fe</name>
        <dbReference type="ChEBI" id="CHEBI:18248"/>
    </ligandPart>
</feature>
<comment type="cofactor">
    <cofactor evidence="1">
        <name>heme</name>
        <dbReference type="ChEBI" id="CHEBI:30413"/>
    </cofactor>
</comment>
<comment type="subcellular location">
    <subcellularLocation>
        <location evidence="3">Cell membrane</location>
        <topology evidence="3">Multi-pass membrane protein</topology>
    </subcellularLocation>
</comment>
<comment type="similarity">
    <text evidence="3">Belongs to the cytochrome P450 family.</text>
</comment>